<evidence type="ECO:0000255" key="1">
    <source>
        <dbReference type="HAMAP-Rule" id="MF_00021"/>
    </source>
</evidence>
<comment type="function">
    <text evidence="1">Catalyzes the ATP-dependent transfer of a sulfur to tRNA to produce 4-thiouridine in position 8 of tRNAs, which functions as a near-UV photosensor. Also catalyzes the transfer of sulfur to the sulfur carrier protein ThiS, forming ThiS-thiocarboxylate. This is a step in the synthesis of thiazole, in the thiamine biosynthesis pathway. The sulfur is donated as persulfide by IscS.</text>
</comment>
<comment type="catalytic activity">
    <reaction evidence="1">
        <text>[ThiI sulfur-carrier protein]-S-sulfanyl-L-cysteine + a uridine in tRNA + 2 reduced [2Fe-2S]-[ferredoxin] + ATP + H(+) = [ThiI sulfur-carrier protein]-L-cysteine + a 4-thiouridine in tRNA + 2 oxidized [2Fe-2S]-[ferredoxin] + AMP + diphosphate</text>
        <dbReference type="Rhea" id="RHEA:24176"/>
        <dbReference type="Rhea" id="RHEA-COMP:10000"/>
        <dbReference type="Rhea" id="RHEA-COMP:10001"/>
        <dbReference type="Rhea" id="RHEA-COMP:13337"/>
        <dbReference type="Rhea" id="RHEA-COMP:13338"/>
        <dbReference type="Rhea" id="RHEA-COMP:13339"/>
        <dbReference type="Rhea" id="RHEA-COMP:13340"/>
        <dbReference type="ChEBI" id="CHEBI:15378"/>
        <dbReference type="ChEBI" id="CHEBI:29950"/>
        <dbReference type="ChEBI" id="CHEBI:30616"/>
        <dbReference type="ChEBI" id="CHEBI:33019"/>
        <dbReference type="ChEBI" id="CHEBI:33737"/>
        <dbReference type="ChEBI" id="CHEBI:33738"/>
        <dbReference type="ChEBI" id="CHEBI:61963"/>
        <dbReference type="ChEBI" id="CHEBI:65315"/>
        <dbReference type="ChEBI" id="CHEBI:136798"/>
        <dbReference type="ChEBI" id="CHEBI:456215"/>
        <dbReference type="EC" id="2.8.1.4"/>
    </reaction>
</comment>
<comment type="catalytic activity">
    <reaction evidence="1">
        <text>[ThiS sulfur-carrier protein]-C-terminal Gly-Gly-AMP + S-sulfanyl-L-cysteinyl-[cysteine desulfurase] + AH2 = [ThiS sulfur-carrier protein]-C-terminal-Gly-aminoethanethioate + L-cysteinyl-[cysteine desulfurase] + A + AMP + 2 H(+)</text>
        <dbReference type="Rhea" id="RHEA:43340"/>
        <dbReference type="Rhea" id="RHEA-COMP:12157"/>
        <dbReference type="Rhea" id="RHEA-COMP:12158"/>
        <dbReference type="Rhea" id="RHEA-COMP:12910"/>
        <dbReference type="Rhea" id="RHEA-COMP:19908"/>
        <dbReference type="ChEBI" id="CHEBI:13193"/>
        <dbReference type="ChEBI" id="CHEBI:15378"/>
        <dbReference type="ChEBI" id="CHEBI:17499"/>
        <dbReference type="ChEBI" id="CHEBI:29950"/>
        <dbReference type="ChEBI" id="CHEBI:61963"/>
        <dbReference type="ChEBI" id="CHEBI:90618"/>
        <dbReference type="ChEBI" id="CHEBI:232372"/>
        <dbReference type="ChEBI" id="CHEBI:456215"/>
    </reaction>
</comment>
<comment type="pathway">
    <text evidence="1">Cofactor biosynthesis; thiamine diphosphate biosynthesis.</text>
</comment>
<comment type="subcellular location">
    <subcellularLocation>
        <location evidence="1">Cytoplasm</location>
    </subcellularLocation>
</comment>
<comment type="similarity">
    <text evidence="1">Belongs to the ThiI family.</text>
</comment>
<accession>Q98PK4</accession>
<gene>
    <name evidence="1" type="primary">thiI</name>
    <name type="ordered locus">MYPU_7180</name>
</gene>
<reference key="1">
    <citation type="journal article" date="2001" name="Nucleic Acids Res.">
        <title>The complete genome sequence of the murine respiratory pathogen Mycoplasma pulmonis.</title>
        <authorList>
            <person name="Chambaud I."/>
            <person name="Heilig R."/>
            <person name="Ferris S."/>
            <person name="Barbe V."/>
            <person name="Samson D."/>
            <person name="Galisson F."/>
            <person name="Moszer I."/>
            <person name="Dybvig K."/>
            <person name="Wroblewski H."/>
            <person name="Viari A."/>
            <person name="Rocha E.P.C."/>
            <person name="Blanchard A."/>
        </authorList>
    </citation>
    <scope>NUCLEOTIDE SEQUENCE [LARGE SCALE GENOMIC DNA]</scope>
    <source>
        <strain>UAB CTIP</strain>
    </source>
</reference>
<dbReference type="EC" id="2.8.1.4" evidence="1"/>
<dbReference type="EMBL" id="AL445565">
    <property type="protein sequence ID" value="CAC13891.1"/>
    <property type="molecule type" value="Genomic_DNA"/>
</dbReference>
<dbReference type="PIR" id="F90601">
    <property type="entry name" value="F90601"/>
</dbReference>
<dbReference type="RefSeq" id="WP_010925519.1">
    <property type="nucleotide sequence ID" value="NC_002771.1"/>
</dbReference>
<dbReference type="SMR" id="Q98PK4"/>
<dbReference type="STRING" id="272635.gene:17577329"/>
<dbReference type="KEGG" id="mpu:MYPU_7180"/>
<dbReference type="eggNOG" id="COG0301">
    <property type="taxonomic scope" value="Bacteria"/>
</dbReference>
<dbReference type="HOGENOM" id="CLU_037952_4_0_14"/>
<dbReference type="BioCyc" id="MPUL272635:G1GT6-731-MONOMER"/>
<dbReference type="UniPathway" id="UPA00060"/>
<dbReference type="Proteomes" id="UP000000528">
    <property type="component" value="Chromosome"/>
</dbReference>
<dbReference type="GO" id="GO:0005829">
    <property type="term" value="C:cytosol"/>
    <property type="evidence" value="ECO:0007669"/>
    <property type="project" value="TreeGrafter"/>
</dbReference>
<dbReference type="GO" id="GO:0005524">
    <property type="term" value="F:ATP binding"/>
    <property type="evidence" value="ECO:0007669"/>
    <property type="project" value="UniProtKB-UniRule"/>
</dbReference>
<dbReference type="GO" id="GO:0004810">
    <property type="term" value="F:CCA tRNA nucleotidyltransferase activity"/>
    <property type="evidence" value="ECO:0007669"/>
    <property type="project" value="InterPro"/>
</dbReference>
<dbReference type="GO" id="GO:0000049">
    <property type="term" value="F:tRNA binding"/>
    <property type="evidence" value="ECO:0007669"/>
    <property type="project" value="UniProtKB-UniRule"/>
</dbReference>
<dbReference type="GO" id="GO:0140741">
    <property type="term" value="F:tRNA-uracil-4 sulfurtransferase activity"/>
    <property type="evidence" value="ECO:0007669"/>
    <property type="project" value="UniProtKB-EC"/>
</dbReference>
<dbReference type="GO" id="GO:0009228">
    <property type="term" value="P:thiamine biosynthetic process"/>
    <property type="evidence" value="ECO:0007669"/>
    <property type="project" value="UniProtKB-KW"/>
</dbReference>
<dbReference type="GO" id="GO:0009229">
    <property type="term" value="P:thiamine diphosphate biosynthetic process"/>
    <property type="evidence" value="ECO:0007669"/>
    <property type="project" value="UniProtKB-UniRule"/>
</dbReference>
<dbReference type="GO" id="GO:0052837">
    <property type="term" value="P:thiazole biosynthetic process"/>
    <property type="evidence" value="ECO:0007669"/>
    <property type="project" value="TreeGrafter"/>
</dbReference>
<dbReference type="GO" id="GO:0002937">
    <property type="term" value="P:tRNA 4-thiouridine biosynthesis"/>
    <property type="evidence" value="ECO:0007669"/>
    <property type="project" value="TreeGrafter"/>
</dbReference>
<dbReference type="CDD" id="cd01712">
    <property type="entry name" value="PPase_ThiI"/>
    <property type="match status" value="1"/>
</dbReference>
<dbReference type="CDD" id="cd11716">
    <property type="entry name" value="THUMP_ThiI"/>
    <property type="match status" value="1"/>
</dbReference>
<dbReference type="Gene3D" id="3.30.2130.30">
    <property type="match status" value="1"/>
</dbReference>
<dbReference type="Gene3D" id="3.40.50.620">
    <property type="entry name" value="HUPs"/>
    <property type="match status" value="1"/>
</dbReference>
<dbReference type="HAMAP" id="MF_00021">
    <property type="entry name" value="ThiI"/>
    <property type="match status" value="1"/>
</dbReference>
<dbReference type="InterPro" id="IPR014729">
    <property type="entry name" value="Rossmann-like_a/b/a_fold"/>
</dbReference>
<dbReference type="InterPro" id="IPR020536">
    <property type="entry name" value="ThiI_AANH"/>
</dbReference>
<dbReference type="InterPro" id="IPR054173">
    <property type="entry name" value="ThiI_fer"/>
</dbReference>
<dbReference type="InterPro" id="IPR049961">
    <property type="entry name" value="ThiI_N"/>
</dbReference>
<dbReference type="InterPro" id="IPR004114">
    <property type="entry name" value="THUMP_dom"/>
</dbReference>
<dbReference type="InterPro" id="IPR049962">
    <property type="entry name" value="THUMP_ThiI"/>
</dbReference>
<dbReference type="InterPro" id="IPR003720">
    <property type="entry name" value="tRNA_STrfase"/>
</dbReference>
<dbReference type="InterPro" id="IPR050102">
    <property type="entry name" value="tRNA_sulfurtransferase_ThiI"/>
</dbReference>
<dbReference type="NCBIfam" id="TIGR00342">
    <property type="entry name" value="tRNA uracil 4-sulfurtransferase ThiI"/>
    <property type="match status" value="1"/>
</dbReference>
<dbReference type="PANTHER" id="PTHR43209">
    <property type="entry name" value="TRNA SULFURTRANSFERASE"/>
    <property type="match status" value="1"/>
</dbReference>
<dbReference type="PANTHER" id="PTHR43209:SF1">
    <property type="entry name" value="TRNA SULFURTRANSFERASE"/>
    <property type="match status" value="1"/>
</dbReference>
<dbReference type="Pfam" id="PF02568">
    <property type="entry name" value="ThiI"/>
    <property type="match status" value="1"/>
</dbReference>
<dbReference type="Pfam" id="PF22025">
    <property type="entry name" value="ThiI_fer"/>
    <property type="match status" value="1"/>
</dbReference>
<dbReference type="Pfam" id="PF02926">
    <property type="entry name" value="THUMP"/>
    <property type="match status" value="1"/>
</dbReference>
<dbReference type="SMART" id="SM00981">
    <property type="entry name" value="THUMP"/>
    <property type="match status" value="1"/>
</dbReference>
<dbReference type="SUPFAM" id="SSF52402">
    <property type="entry name" value="Adenine nucleotide alpha hydrolases-like"/>
    <property type="match status" value="1"/>
</dbReference>
<dbReference type="SUPFAM" id="SSF143437">
    <property type="entry name" value="THUMP domain-like"/>
    <property type="match status" value="1"/>
</dbReference>
<dbReference type="PROSITE" id="PS51165">
    <property type="entry name" value="THUMP"/>
    <property type="match status" value="1"/>
</dbReference>
<organism>
    <name type="scientific">Mycoplasmopsis pulmonis (strain UAB CTIP)</name>
    <name type="common">Mycoplasma pulmonis</name>
    <dbReference type="NCBI Taxonomy" id="272635"/>
    <lineage>
        <taxon>Bacteria</taxon>
        <taxon>Bacillati</taxon>
        <taxon>Mycoplasmatota</taxon>
        <taxon>Mycoplasmoidales</taxon>
        <taxon>Metamycoplasmataceae</taxon>
        <taxon>Mycoplasmopsis</taxon>
    </lineage>
</organism>
<protein>
    <recommendedName>
        <fullName evidence="1">Probable tRNA sulfurtransferase</fullName>
        <ecNumber evidence="1">2.8.1.4</ecNumber>
    </recommendedName>
    <alternativeName>
        <fullName evidence="1">Sulfur carrier protein ThiS sulfurtransferase</fullName>
    </alternativeName>
    <alternativeName>
        <fullName evidence="1">Thiamine biosynthesis protein ThiI</fullName>
    </alternativeName>
    <alternativeName>
        <fullName evidence="1">tRNA 4-thiouridine synthase</fullName>
    </alternativeName>
</protein>
<proteinExistence type="inferred from homology"/>
<name>THII_MYCPU</name>
<sequence length="379" mass="43810">MNYQKILIRYGELVLKKKNRSLFISILKQNIQKILDTKVEDEFDRMFVEYKDEFLDKLKFIPGISSFSPVKVCEKKLENIQQEVLEETQKNTNEFTKTFKIISRRSDKNFELNSLEMNNYFGSLILKNFELKVDVKKPDLNINIEVGRHHAFVFCKIYYSIGGLPVSSSGKSLHLLSGGIDSPVAAIELMKRGIKVEFLAFVTPPHTDEKTVNKLMMLKDVFNKFQHDSKIHLVNYTKIMNYISLISDQSYKIALMRRSFYRIADKIAKRKKIMAISNGENLGQVASQTIESMICISSQTNLLIFRPLLAWNKVDIINLGQKYKTYQISTIPASESCELFAPEKPVIKPTISKAEELEKELEKIFEYEDELVESVLSQK</sequence>
<feature type="chain" id="PRO_0000154852" description="Probable tRNA sulfurtransferase">
    <location>
        <begin position="1"/>
        <end position="379"/>
    </location>
</feature>
<feature type="domain" description="THUMP" evidence="1">
    <location>
        <begin position="52"/>
        <end position="157"/>
    </location>
</feature>
<feature type="binding site" evidence="1">
    <location>
        <begin position="175"/>
        <end position="176"/>
    </location>
    <ligand>
        <name>ATP</name>
        <dbReference type="ChEBI" id="CHEBI:30616"/>
    </ligand>
</feature>
<feature type="binding site" evidence="1">
    <location>
        <position position="257"/>
    </location>
    <ligand>
        <name>ATP</name>
        <dbReference type="ChEBI" id="CHEBI:30616"/>
    </ligand>
</feature>
<feature type="binding site" evidence="1">
    <location>
        <position position="279"/>
    </location>
    <ligand>
        <name>ATP</name>
        <dbReference type="ChEBI" id="CHEBI:30616"/>
    </ligand>
</feature>
<feature type="binding site" evidence="1">
    <location>
        <position position="288"/>
    </location>
    <ligand>
        <name>ATP</name>
        <dbReference type="ChEBI" id="CHEBI:30616"/>
    </ligand>
</feature>
<keyword id="KW-0067">ATP-binding</keyword>
<keyword id="KW-0963">Cytoplasm</keyword>
<keyword id="KW-0547">Nucleotide-binding</keyword>
<keyword id="KW-1185">Reference proteome</keyword>
<keyword id="KW-0694">RNA-binding</keyword>
<keyword id="KW-0784">Thiamine biosynthesis</keyword>
<keyword id="KW-0808">Transferase</keyword>
<keyword id="KW-0820">tRNA-binding</keyword>